<feature type="chain" id="PRO_0000164199" description="Probable multidrug resistance protein NorM">
    <location>
        <begin position="1"/>
        <end position="452"/>
    </location>
</feature>
<feature type="transmembrane region" description="Helical" evidence="2">
    <location>
        <begin position="13"/>
        <end position="34"/>
    </location>
</feature>
<feature type="transmembrane region" description="Helical" evidence="2">
    <location>
        <begin position="49"/>
        <end position="71"/>
    </location>
</feature>
<feature type="transmembrane region" description="Helical" evidence="2">
    <location>
        <begin position="92"/>
        <end position="114"/>
    </location>
</feature>
<feature type="transmembrane region" description="Helical" evidence="2">
    <location>
        <begin position="129"/>
        <end position="151"/>
    </location>
</feature>
<feature type="transmembrane region" description="Helical" evidence="2">
    <location>
        <begin position="164"/>
        <end position="183"/>
    </location>
</feature>
<feature type="transmembrane region" description="Helical" evidence="2">
    <location>
        <begin position="193"/>
        <end position="215"/>
    </location>
</feature>
<feature type="transmembrane region" description="Helical" evidence="2">
    <location>
        <begin position="240"/>
        <end position="262"/>
    </location>
</feature>
<feature type="transmembrane region" description="Helical" evidence="2">
    <location>
        <begin position="282"/>
        <end position="304"/>
    </location>
</feature>
<feature type="transmembrane region" description="Helical" evidence="2">
    <location>
        <begin position="317"/>
        <end position="339"/>
    </location>
</feature>
<feature type="transmembrane region" description="Helical" evidence="2">
    <location>
        <begin position="359"/>
        <end position="381"/>
    </location>
</feature>
<feature type="transmembrane region" description="Helical" evidence="2">
    <location>
        <begin position="388"/>
        <end position="410"/>
    </location>
</feature>
<feature type="transmembrane region" description="Helical" evidence="2">
    <location>
        <begin position="420"/>
        <end position="442"/>
    </location>
</feature>
<name>NORM_BACCR</name>
<dbReference type="EMBL" id="AE016877">
    <property type="protein sequence ID" value="AAP08365.1"/>
    <property type="molecule type" value="Genomic_DNA"/>
</dbReference>
<dbReference type="RefSeq" id="NP_831164.1">
    <property type="nucleotide sequence ID" value="NC_004722.1"/>
</dbReference>
<dbReference type="RefSeq" id="WP_000665560.1">
    <property type="nucleotide sequence ID" value="NC_004722.1"/>
</dbReference>
<dbReference type="SMR" id="Q81G28"/>
<dbReference type="STRING" id="226900.BC_1383"/>
<dbReference type="KEGG" id="bce:BC1383"/>
<dbReference type="PATRIC" id="fig|226900.8.peg.1357"/>
<dbReference type="HOGENOM" id="CLU_012893_6_0_9"/>
<dbReference type="Proteomes" id="UP000001417">
    <property type="component" value="Chromosome"/>
</dbReference>
<dbReference type="GO" id="GO:0016020">
    <property type="term" value="C:membrane"/>
    <property type="evidence" value="ECO:0000318"/>
    <property type="project" value="GO_Central"/>
</dbReference>
<dbReference type="GO" id="GO:0005886">
    <property type="term" value="C:plasma membrane"/>
    <property type="evidence" value="ECO:0007669"/>
    <property type="project" value="UniProtKB-SubCell"/>
</dbReference>
<dbReference type="GO" id="GO:0015297">
    <property type="term" value="F:antiporter activity"/>
    <property type="evidence" value="ECO:0007669"/>
    <property type="project" value="UniProtKB-KW"/>
</dbReference>
<dbReference type="GO" id="GO:0042910">
    <property type="term" value="F:xenobiotic transmembrane transporter activity"/>
    <property type="evidence" value="ECO:0000318"/>
    <property type="project" value="GO_Central"/>
</dbReference>
<dbReference type="GO" id="GO:0006811">
    <property type="term" value="P:monoatomic ion transport"/>
    <property type="evidence" value="ECO:0007669"/>
    <property type="project" value="UniProtKB-KW"/>
</dbReference>
<dbReference type="GO" id="GO:0046677">
    <property type="term" value="P:response to antibiotic"/>
    <property type="evidence" value="ECO:0000318"/>
    <property type="project" value="GO_Central"/>
</dbReference>
<dbReference type="CDD" id="cd13131">
    <property type="entry name" value="MATE_NorM_like"/>
    <property type="match status" value="1"/>
</dbReference>
<dbReference type="InterPro" id="IPR002528">
    <property type="entry name" value="MATE_fam"/>
</dbReference>
<dbReference type="InterPro" id="IPR050222">
    <property type="entry name" value="MATE_MdtK"/>
</dbReference>
<dbReference type="InterPro" id="IPR048279">
    <property type="entry name" value="MdtK-like"/>
</dbReference>
<dbReference type="NCBIfam" id="TIGR00797">
    <property type="entry name" value="matE"/>
    <property type="match status" value="1"/>
</dbReference>
<dbReference type="PANTHER" id="PTHR43298:SF2">
    <property type="entry name" value="FMN_FAD EXPORTER YEEO-RELATED"/>
    <property type="match status" value="1"/>
</dbReference>
<dbReference type="PANTHER" id="PTHR43298">
    <property type="entry name" value="MULTIDRUG RESISTANCE PROTEIN NORM-RELATED"/>
    <property type="match status" value="1"/>
</dbReference>
<dbReference type="Pfam" id="PF01554">
    <property type="entry name" value="MatE"/>
    <property type="match status" value="2"/>
</dbReference>
<dbReference type="PIRSF" id="PIRSF006603">
    <property type="entry name" value="DinF"/>
    <property type="match status" value="1"/>
</dbReference>
<evidence type="ECO:0000250" key="1"/>
<evidence type="ECO:0000255" key="2"/>
<evidence type="ECO:0000305" key="3"/>
<accession>Q81G28</accession>
<comment type="function">
    <text evidence="1">Multidrug efflux pump.</text>
</comment>
<comment type="subcellular location">
    <subcellularLocation>
        <location evidence="1">Cell membrane</location>
        <topology evidence="1">Multi-pass membrane protein</topology>
    </subcellularLocation>
</comment>
<comment type="similarity">
    <text evidence="3">Belongs to the multi antimicrobial extrusion (MATE) (TC 2.A.66.1) family.</text>
</comment>
<sequence length="452" mass="49579">MKETTSFSQKLKQFVLLFFPIFVTQMSLFAMSFFDTTMSGHASPTDLSGVAIGTSIWIPVSTGLTGILMATTPIVAQLVGSKKKEDVPHVVIQAVYLAICASFVVILIGFFVVSPILNGMRLEEPVERIAAQFLSIIAIGIIPLFTYTVLRGFIDALGKTRTTMIITLLSLPINVILNYLLIFGNFGFPKLGGVGAAIASTATYWCILIITVIIIQTKEPFASFNIFKQLYRPSLSSWIAFLKLGVPIGFAIFFETSIFAAVTLMMSNFSTTTIAAHQAAMNFASLLYMTPLSLAMAMTIAVGFEVGAKRYDNAKQYGLIGIGLALAFALLYSILLYFFDDQIASIYTTDAKVHHLAKEFLIFAILFQISDAIATPVQGALRGYKDVNVALIMTLIAYWIIGLPLGYILATYTEWAAKGYWIGLIIGLAFGAAFLLIRLFQVQRKYTTQNSR</sequence>
<organism>
    <name type="scientific">Bacillus cereus (strain ATCC 14579 / DSM 31 / CCUG 7414 / JCM 2152 / NBRC 15305 / NCIMB 9373 / NCTC 2599 / NRRL B-3711)</name>
    <dbReference type="NCBI Taxonomy" id="226900"/>
    <lineage>
        <taxon>Bacteria</taxon>
        <taxon>Bacillati</taxon>
        <taxon>Bacillota</taxon>
        <taxon>Bacilli</taxon>
        <taxon>Bacillales</taxon>
        <taxon>Bacillaceae</taxon>
        <taxon>Bacillus</taxon>
        <taxon>Bacillus cereus group</taxon>
    </lineage>
</organism>
<protein>
    <recommendedName>
        <fullName>Probable multidrug resistance protein NorM</fullName>
    </recommendedName>
    <alternativeName>
        <fullName>Multidrug-efflux transporter</fullName>
    </alternativeName>
</protein>
<gene>
    <name type="primary">norM</name>
    <name type="ordered locus">BC_1383</name>
</gene>
<reference key="1">
    <citation type="journal article" date="2003" name="Nature">
        <title>Genome sequence of Bacillus cereus and comparative analysis with Bacillus anthracis.</title>
        <authorList>
            <person name="Ivanova N."/>
            <person name="Sorokin A."/>
            <person name="Anderson I."/>
            <person name="Galleron N."/>
            <person name="Candelon B."/>
            <person name="Kapatral V."/>
            <person name="Bhattacharyya A."/>
            <person name="Reznik G."/>
            <person name="Mikhailova N."/>
            <person name="Lapidus A."/>
            <person name="Chu L."/>
            <person name="Mazur M."/>
            <person name="Goltsman E."/>
            <person name="Larsen N."/>
            <person name="D'Souza M."/>
            <person name="Walunas T."/>
            <person name="Grechkin Y."/>
            <person name="Pusch G."/>
            <person name="Haselkorn R."/>
            <person name="Fonstein M."/>
            <person name="Ehrlich S.D."/>
            <person name="Overbeek R."/>
            <person name="Kyrpides N.C."/>
        </authorList>
    </citation>
    <scope>NUCLEOTIDE SEQUENCE [LARGE SCALE GENOMIC DNA]</scope>
    <source>
        <strain>ATCC 14579 / DSM 31 / CCUG 7414 / JCM 2152 / NBRC 15305 / NCIMB 9373 / NCTC 2599 / NRRL B-3711</strain>
    </source>
</reference>
<keyword id="KW-0050">Antiport</keyword>
<keyword id="KW-1003">Cell membrane</keyword>
<keyword id="KW-0406">Ion transport</keyword>
<keyword id="KW-0472">Membrane</keyword>
<keyword id="KW-1185">Reference proteome</keyword>
<keyword id="KW-0812">Transmembrane</keyword>
<keyword id="KW-1133">Transmembrane helix</keyword>
<keyword id="KW-0813">Transport</keyword>
<proteinExistence type="inferred from homology"/>